<reference key="1">
    <citation type="submission" date="2003-05" db="EMBL/GenBank/DDBJ databases">
        <authorList>
            <person name="Dietrich F.S."/>
            <person name="Ray C.A."/>
            <person name="Sharma D.A."/>
            <person name="Allen A."/>
            <person name="Pickup D.J."/>
        </authorList>
    </citation>
    <scope>NUCLEOTIDE SEQUENCE [LARGE SCALE GENOMIC DNA]</scope>
</reference>
<organismHost>
    <name type="scientific">Bos taurus</name>
    <name type="common">Bovine</name>
    <dbReference type="NCBI Taxonomy" id="9913"/>
</organismHost>
<organismHost>
    <name type="scientific">Felis catus</name>
    <name type="common">Cat</name>
    <name type="synonym">Felis silvestris catus</name>
    <dbReference type="NCBI Taxonomy" id="9685"/>
</organismHost>
<organismHost>
    <name type="scientific">Homo sapiens</name>
    <name type="common">Human</name>
    <dbReference type="NCBI Taxonomy" id="9606"/>
</organismHost>
<organismHost>
    <name type="scientific">Loxodonta africana</name>
    <name type="common">African elephant</name>
    <dbReference type="NCBI Taxonomy" id="9785"/>
</organismHost>
<organismHost>
    <name type="scientific">Microtus agrestis</name>
    <name type="common">Short-tailed field vole</name>
    <dbReference type="NCBI Taxonomy" id="29092"/>
</organismHost>
<organismHost>
    <name type="scientific">Mus musculus</name>
    <name type="common">Mouse</name>
    <dbReference type="NCBI Taxonomy" id="10090"/>
</organismHost>
<organismHost>
    <name type="scientific">Myodes glareolus</name>
    <name type="common">Bank vole</name>
    <name type="synonym">Clethrionomys glareolus</name>
    <dbReference type="NCBI Taxonomy" id="447135"/>
</organismHost>
<accession>Q8QMV9</accession>
<proteinExistence type="inferred from homology"/>
<dbReference type="EC" id="3.6.1.74"/>
<dbReference type="EC" id="2.7.7.50"/>
<dbReference type="EC" id="2.1.1.56"/>
<dbReference type="EMBL" id="AF482758">
    <property type="protein sequence ID" value="AAM13560.1"/>
    <property type="molecule type" value="Genomic_DNA"/>
</dbReference>
<dbReference type="SMR" id="Q8QMV9"/>
<dbReference type="DNASU" id="1485995"/>
<dbReference type="KEGG" id="vg:1485995"/>
<dbReference type="Proteomes" id="UP000152733">
    <property type="component" value="Segment"/>
</dbReference>
<dbReference type="GO" id="GO:0044423">
    <property type="term" value="C:virion component"/>
    <property type="evidence" value="ECO:0007669"/>
    <property type="project" value="UniProtKB-KW"/>
</dbReference>
<dbReference type="GO" id="GO:0005525">
    <property type="term" value="F:GTP binding"/>
    <property type="evidence" value="ECO:0007669"/>
    <property type="project" value="UniProtKB-KW"/>
</dbReference>
<dbReference type="GO" id="GO:0050355">
    <property type="term" value="F:inorganic triphosphate phosphatase activity"/>
    <property type="evidence" value="ECO:0007669"/>
    <property type="project" value="InterPro"/>
</dbReference>
<dbReference type="GO" id="GO:0046872">
    <property type="term" value="F:metal ion binding"/>
    <property type="evidence" value="ECO:0007669"/>
    <property type="project" value="UniProtKB-KW"/>
</dbReference>
<dbReference type="GO" id="GO:0004482">
    <property type="term" value="F:mRNA 5'-cap (guanine-N7-)-methyltransferase activity"/>
    <property type="evidence" value="ECO:0007669"/>
    <property type="project" value="UniProtKB-EC"/>
</dbReference>
<dbReference type="GO" id="GO:0140818">
    <property type="term" value="F:mRNA 5'-triphosphate monophosphatase activity"/>
    <property type="evidence" value="ECO:0007669"/>
    <property type="project" value="RHEA"/>
</dbReference>
<dbReference type="GO" id="GO:0004484">
    <property type="term" value="F:mRNA guanylyltransferase activity"/>
    <property type="evidence" value="ECO:0007669"/>
    <property type="project" value="UniProtKB-EC"/>
</dbReference>
<dbReference type="GO" id="GO:0004651">
    <property type="term" value="F:polynucleotide 5'-phosphatase activity"/>
    <property type="evidence" value="ECO:0007669"/>
    <property type="project" value="UniProtKB-EC"/>
</dbReference>
<dbReference type="GO" id="GO:0003723">
    <property type="term" value="F:RNA binding"/>
    <property type="evidence" value="ECO:0007669"/>
    <property type="project" value="UniProtKB-KW"/>
</dbReference>
<dbReference type="FunFam" id="3.30.470.140:FF:000001">
    <property type="entry name" value="mRNA-capping enzyme catalytic subunit"/>
    <property type="match status" value="1"/>
</dbReference>
<dbReference type="FunFam" id="3.40.50.150:FF:000307">
    <property type="entry name" value="mRNA-capping enzyme catalytic subunit"/>
    <property type="match status" value="1"/>
</dbReference>
<dbReference type="Gene3D" id="2.40.50.830">
    <property type="match status" value="1"/>
</dbReference>
<dbReference type="Gene3D" id="3.20.100.20">
    <property type="match status" value="1"/>
</dbReference>
<dbReference type="Gene3D" id="3.30.470.140">
    <property type="match status" value="1"/>
</dbReference>
<dbReference type="Gene3D" id="3.40.50.150">
    <property type="entry name" value="Vaccinia Virus protein VP39"/>
    <property type="match status" value="1"/>
</dbReference>
<dbReference type="InterPro" id="IPR048425">
    <property type="entry name" value="MCEL_GT_NTPase"/>
</dbReference>
<dbReference type="InterPro" id="IPR048426">
    <property type="entry name" value="MCEL_GT_OB"/>
</dbReference>
<dbReference type="InterPro" id="IPR046429">
    <property type="entry name" value="MCEL_NTPase_sf"/>
</dbReference>
<dbReference type="InterPro" id="IPR046428">
    <property type="entry name" value="MCEL_OB_dom_sf"/>
</dbReference>
<dbReference type="InterPro" id="IPR019602">
    <property type="entry name" value="MCEL_TPase"/>
</dbReference>
<dbReference type="InterPro" id="IPR046430">
    <property type="entry name" value="MCEL_TPase_sf"/>
</dbReference>
<dbReference type="InterPro" id="IPR004971">
    <property type="entry name" value="mRNA_G-N7_MeTrfase_dom"/>
</dbReference>
<dbReference type="InterPro" id="IPR039753">
    <property type="entry name" value="RG7MT1"/>
</dbReference>
<dbReference type="InterPro" id="IPR029063">
    <property type="entry name" value="SAM-dependent_MTases_sf"/>
</dbReference>
<dbReference type="PANTHER" id="PTHR12189:SF2">
    <property type="entry name" value="MRNA CAP GUANINE-N7 METHYLTRANSFERASE"/>
    <property type="match status" value="1"/>
</dbReference>
<dbReference type="PANTHER" id="PTHR12189">
    <property type="entry name" value="MRNA GUANINE-7- METHYLTRANSFERASE"/>
    <property type="match status" value="1"/>
</dbReference>
<dbReference type="Pfam" id="PF21004">
    <property type="entry name" value="MCEL_GT_NTPase"/>
    <property type="match status" value="1"/>
</dbReference>
<dbReference type="Pfam" id="PF21005">
    <property type="entry name" value="MCEL_GT_OB"/>
    <property type="match status" value="1"/>
</dbReference>
<dbReference type="Pfam" id="PF10640">
    <property type="entry name" value="MCEL_TPase"/>
    <property type="match status" value="1"/>
</dbReference>
<dbReference type="Pfam" id="PF03291">
    <property type="entry name" value="mRNA_G-N7_MeTrfase"/>
    <property type="match status" value="1"/>
</dbReference>
<dbReference type="SUPFAM" id="SSF53335">
    <property type="entry name" value="S-adenosyl-L-methionine-dependent methyltransferases"/>
    <property type="match status" value="1"/>
</dbReference>
<dbReference type="PROSITE" id="PS51562">
    <property type="entry name" value="RNA_CAP0_MT"/>
    <property type="match status" value="1"/>
</dbReference>
<feature type="chain" id="PRO_0000210128" description="mRNA-capping enzyme catalytic subunit">
    <location>
        <begin position="1"/>
        <end position="844"/>
    </location>
</feature>
<feature type="domain" description="mRNA cap 0 methyltransferase" evidence="3">
    <location>
        <begin position="560"/>
        <end position="844"/>
    </location>
</feature>
<feature type="region of interest" description="Triphosphatase-guanylyltransferase" evidence="1">
    <location>
        <begin position="1"/>
        <end position="539"/>
    </location>
</feature>
<feature type="active site" description="N6-GMP-lysine intermediate" evidence="1">
    <location>
        <position position="260"/>
    </location>
</feature>
<feature type="binding site" evidence="2">
    <location>
        <position position="37"/>
    </location>
    <ligand>
        <name>Mg(2+)</name>
        <dbReference type="ChEBI" id="CHEBI:18420"/>
        <note>catalytic; for RNA triphosphatase activity</note>
    </ligand>
</feature>
<feature type="binding site" evidence="2">
    <location>
        <position position="39"/>
    </location>
    <ligand>
        <name>Mg(2+)</name>
        <dbReference type="ChEBI" id="CHEBI:18420"/>
        <note>catalytic; for RNA triphosphatase activity</note>
    </ligand>
</feature>
<feature type="binding site" evidence="2">
    <location>
        <position position="192"/>
    </location>
    <ligand>
        <name>Mg(2+)</name>
        <dbReference type="ChEBI" id="CHEBI:18420"/>
        <note>catalytic; for RNA triphosphatase activity</note>
    </ligand>
</feature>
<feature type="binding site" evidence="2">
    <location>
        <position position="194"/>
    </location>
    <ligand>
        <name>Mg(2+)</name>
        <dbReference type="ChEBI" id="CHEBI:18420"/>
        <note>catalytic; for RNA triphosphatase activity</note>
    </ligand>
</feature>
<feature type="binding site" evidence="3">
    <location>
        <begin position="549"/>
        <end position="550"/>
    </location>
    <ligand>
        <name>S-adenosyl-L-methionine</name>
        <dbReference type="ChEBI" id="CHEBI:59789"/>
    </ligand>
</feature>
<feature type="binding site" evidence="3">
    <location>
        <begin position="569"/>
        <end position="570"/>
    </location>
    <ligand>
        <name>mRNA</name>
        <dbReference type="ChEBI" id="CHEBI:33699"/>
    </ligand>
    <ligandPart>
        <name>mRNA cap</name>
    </ligandPart>
</feature>
<feature type="binding site" evidence="3">
    <location>
        <position position="573"/>
    </location>
    <ligand>
        <name>S-adenosyl-L-methionine</name>
        <dbReference type="ChEBI" id="CHEBI:59789"/>
    </ligand>
</feature>
<feature type="binding site" evidence="3">
    <location>
        <position position="598"/>
    </location>
    <ligand>
        <name>S-adenosyl-L-methionine</name>
        <dbReference type="ChEBI" id="CHEBI:59789"/>
    </ligand>
</feature>
<feature type="binding site" evidence="3">
    <location>
        <position position="620"/>
    </location>
    <ligand>
        <name>S-adenosyl-L-methionine</name>
        <dbReference type="ChEBI" id="CHEBI:59789"/>
    </ligand>
</feature>
<feature type="binding site" evidence="3">
    <location>
        <begin position="678"/>
        <end position="680"/>
    </location>
    <ligand>
        <name>S-adenosyl-L-methionine</name>
        <dbReference type="ChEBI" id="CHEBI:59789"/>
    </ligand>
</feature>
<feature type="site" description="Essential for RNA triphosphatase activity" evidence="1">
    <location>
        <position position="77"/>
    </location>
</feature>
<feature type="site" description="Essential for RNA triphosphatase activity" evidence="1">
    <location>
        <position position="107"/>
    </location>
</feature>
<feature type="site" description="Essential for RNA triphosphatase activity" evidence="1">
    <location>
        <position position="126"/>
    </location>
</feature>
<feature type="site" description="Essential for RNA triphosphatase activity" evidence="1">
    <location>
        <position position="159"/>
    </location>
</feature>
<feature type="site" description="Essential for RNA triphosphatase activity" evidence="1">
    <location>
        <position position="161"/>
    </location>
</feature>
<feature type="site" description="mRNA cap binding" evidence="3">
    <location>
        <position position="607"/>
    </location>
</feature>
<feature type="site" description="mRNA cap binding" evidence="3">
    <location>
        <position position="632"/>
    </location>
</feature>
<feature type="site" description="mRNA cap binding" evidence="3">
    <location>
        <position position="682"/>
    </location>
</feature>
<feature type="site" description="mRNA cap binding" evidence="3">
    <location>
        <position position="763"/>
    </location>
</feature>
<feature type="site" description="mRNA cap binding" evidence="3">
    <location>
        <position position="836"/>
    </location>
</feature>
<protein>
    <recommendedName>
        <fullName>mRNA-capping enzyme catalytic subunit</fullName>
    </recommendedName>
    <alternativeName>
        <fullName>Virus termination factor large subunit</fullName>
        <shortName>VTF large subunit</shortName>
    </alternativeName>
    <alternativeName>
        <fullName>mRNA-capping enzyme 97 kDa subunit</fullName>
    </alternativeName>
    <alternativeName>
        <fullName>mRNA-capping enzyme large subunit</fullName>
    </alternativeName>
    <domain>
        <recommendedName>
            <fullName>Polynucleotide 5'-triphosphatase</fullName>
            <ecNumber>3.6.1.74</ecNumber>
        </recommendedName>
        <alternativeName>
            <fullName>mRNA 5'-triphosphatase</fullName>
            <shortName>TPase</shortName>
        </alternativeName>
    </domain>
    <domain>
        <recommendedName>
            <fullName>mRNA guanylyltransferase</fullName>
            <ecNumber>2.7.7.50</ecNumber>
        </recommendedName>
        <alternativeName>
            <fullName>GTP--RNA guanylyltransferase</fullName>
            <shortName>GTase</shortName>
        </alternativeName>
    </domain>
    <domain>
        <recommendedName>
            <fullName>mRNA (guanine-N(7))-methyltransferase</fullName>
            <ecNumber>2.1.1.56</ecNumber>
        </recommendedName>
        <alternativeName>
            <fullName>mRNA cap methyltransferase</fullName>
        </alternativeName>
    </domain>
</protein>
<organism>
    <name type="scientific">Cowpox virus (strain Brighton Red)</name>
    <name type="common">CPV</name>
    <dbReference type="NCBI Taxonomy" id="265872"/>
    <lineage>
        <taxon>Viruses</taxon>
        <taxon>Varidnaviria</taxon>
        <taxon>Bamfordvirae</taxon>
        <taxon>Nucleocytoviricota</taxon>
        <taxon>Pokkesviricetes</taxon>
        <taxon>Chitovirales</taxon>
        <taxon>Poxviridae</taxon>
        <taxon>Chordopoxvirinae</taxon>
        <taxon>Orthopoxvirus</taxon>
        <taxon>Cowpox virus</taxon>
    </lineage>
</organism>
<name>MCEL_CWPXB</name>
<evidence type="ECO:0000250" key="1"/>
<evidence type="ECO:0000250" key="2">
    <source>
        <dbReference type="UniProtKB" id="P04298"/>
    </source>
</evidence>
<evidence type="ECO:0000255" key="3">
    <source>
        <dbReference type="PROSITE-ProRule" id="PRU00895"/>
    </source>
</evidence>
<evidence type="ECO:0000305" key="4"/>
<gene>
    <name type="ordered locus">CPXV118</name>
</gene>
<keyword id="KW-0342">GTP-binding</keyword>
<keyword id="KW-0378">Hydrolase</keyword>
<keyword id="KW-0460">Magnesium</keyword>
<keyword id="KW-0479">Metal-binding</keyword>
<keyword id="KW-0489">Methyltransferase</keyword>
<keyword id="KW-0506">mRNA capping</keyword>
<keyword id="KW-0507">mRNA processing</keyword>
<keyword id="KW-0511">Multifunctional enzyme</keyword>
<keyword id="KW-0547">Nucleotide-binding</keyword>
<keyword id="KW-0548">Nucleotidyltransferase</keyword>
<keyword id="KW-0694">RNA-binding</keyword>
<keyword id="KW-0949">S-adenosyl-L-methionine</keyword>
<keyword id="KW-0808">Transferase</keyword>
<keyword id="KW-0946">Virion</keyword>
<sequence length="844" mass="96703">MDANVVSSSTIATYIDALAKNASELEQGSTAYEINNELELVFIKPPLITLTNVVNISTIQESFIRFTVTNKEGVKIRTKIPLSKVHGLDVKNVQLVDAIDNIVWEKKSLVTENRLHKECLLRLSTEERHIFLDYKKYGSSIRLELVNLIQAKTKNFTIDFKLKYFLGSGAQSKSSLLHAINHPKSRPNTSLEIEFTPRDNEKVPYDELIKELTTLSRHIFMASPENVILSPPINPPIKTFMLPKQDIVGLDLENLYAVTKTDGIPITIRVTSKGLYCYFTHLGYIIRYPVKRIIDSEVVVFGEAVKDKNWTVYLIKLIEPVNAISDRLEESKYVESKLVDICDRIVFKSKKYEGPFTTTSEVVDMLSTYLPKQPEGVILFYSKGPKSNIDFKIKKENTIDQTANVVFRYMSSEPIIFGESSIFIEYKKFTNDKGFPKEYGSGKIVLYNGVNYLNNIYCLEYINTHNEVGIKSVVVPIKFIAEFLVNGEILKPRIDKTMKYINSEDYYGNQHNVIVEHLRDQSIKIGDVFNEDKLSDVGHQYANNDKFRLNPEVSYFTNKRTRGPLGILSNYVKTLLISMYCSKTFLDDSNKRKVLAIDFGNGADLEKYFYGEIALLVATDPDADAIARGNERYNKLNSGIKTKYYKFDYIQETIRSDTFVSSVREVFYFGKFNIIDWQFAIHYSFHPRHYATVMNNLSELTASGGKVLITTMDGDKLSKLTDKKTFIIHKNLPSSENYMSVEKIADDRILVYNPSTMSTPMTEYIIKKNDIVRVFNEYGFVLVDNIDFATIIERSKKFINGASTMEDRPSTRNFFELNRGAIKCEGLDVEDLLSYYVVYVFSKR</sequence>
<comment type="function">
    <text evidence="1">Catalytic subunit of the mRNA capping enzyme which catalyzes three enzymatic reactions: the 5' triphosphate end of the pre-mRNA is hydrolyzed to a diphosphate by RNA 5' triphosphatase; the diphosphate RNA end is capped with GMP by RNA guanylyltransferase and the GpppN cap is methylated by RNA (guanine-N7) methyltransferase. Heterodimeric mRNA capping enzyme catalyzes the linkage of a N7-methyl-guanosine moiety to the first transcribed nucleotide (cap 0 structure), whereas the polymerase associated VP39 is responsible for a second methylation at the 2'-O position of the ribose (cap 1 structure) (By similarity).</text>
</comment>
<comment type="function">
    <text evidence="1">The heterodimeric enzyme is also involved in early viral gene transcription termination and intermediate viral gene transcription initiation. Early gene transcription termination requires the termination factor VTF, the DNA-dependent ATPase NPH-I and the Rap94 subunit of the viral RNA polymerase, as well as the presence of a specific termination motif. Binds, together with RAP94, to the termination motif 5'-UUUUUNU-3' in the nascent early mRNA (By similarity).</text>
</comment>
<comment type="catalytic activity">
    <reaction evidence="2">
        <text>a 5'-end triphospho-ribonucleoside in mRNA + H2O = a 5'-end diphospho-ribonucleoside in mRNA + phosphate + H(+)</text>
        <dbReference type="Rhea" id="RHEA:67004"/>
        <dbReference type="Rhea" id="RHEA-COMP:17164"/>
        <dbReference type="Rhea" id="RHEA-COMP:17165"/>
        <dbReference type="ChEBI" id="CHEBI:15377"/>
        <dbReference type="ChEBI" id="CHEBI:15378"/>
        <dbReference type="ChEBI" id="CHEBI:43474"/>
        <dbReference type="ChEBI" id="CHEBI:167616"/>
        <dbReference type="ChEBI" id="CHEBI:167618"/>
        <dbReference type="EC" id="3.6.1.74"/>
    </reaction>
    <physiologicalReaction direction="left-to-right" evidence="2">
        <dbReference type="Rhea" id="RHEA:67005"/>
    </physiologicalReaction>
</comment>
<comment type="catalytic activity">
    <reaction>
        <text>a 5'-end diphospho-ribonucleoside in mRNA + GTP + H(+) = a 5'-end (5'-triphosphoguanosine)-ribonucleoside in mRNA + diphosphate</text>
        <dbReference type="Rhea" id="RHEA:67012"/>
        <dbReference type="Rhea" id="RHEA-COMP:17165"/>
        <dbReference type="Rhea" id="RHEA-COMP:17166"/>
        <dbReference type="ChEBI" id="CHEBI:15378"/>
        <dbReference type="ChEBI" id="CHEBI:33019"/>
        <dbReference type="ChEBI" id="CHEBI:37565"/>
        <dbReference type="ChEBI" id="CHEBI:167616"/>
        <dbReference type="ChEBI" id="CHEBI:167617"/>
        <dbReference type="EC" id="2.7.7.50"/>
    </reaction>
</comment>
<comment type="catalytic activity">
    <reaction evidence="3">
        <text>a 5'-end (5'-triphosphoguanosine)-ribonucleoside in mRNA + S-adenosyl-L-methionine = a 5'-end (N(7)-methyl 5'-triphosphoguanosine)-ribonucleoside in mRNA + S-adenosyl-L-homocysteine</text>
        <dbReference type="Rhea" id="RHEA:67008"/>
        <dbReference type="Rhea" id="RHEA-COMP:17166"/>
        <dbReference type="Rhea" id="RHEA-COMP:17167"/>
        <dbReference type="ChEBI" id="CHEBI:57856"/>
        <dbReference type="ChEBI" id="CHEBI:59789"/>
        <dbReference type="ChEBI" id="CHEBI:156461"/>
        <dbReference type="ChEBI" id="CHEBI:167617"/>
        <dbReference type="EC" id="2.1.1.56"/>
    </reaction>
</comment>
<comment type="cofactor">
    <cofactor evidence="2">
        <name>Mg(2+)</name>
        <dbReference type="ChEBI" id="CHEBI:18420"/>
    </cofactor>
</comment>
<comment type="subunit">
    <text evidence="1">Heterodimer of a catalytic and a regulatory subunit. Intrinsic methyltransferase activity of the catalytic subunit is weak and needs to be stimulated 30- to 50-fold by the regulatory subunit, which is itself catalytically inert (By similarity).</text>
</comment>
<comment type="subcellular location">
    <subcellularLocation>
        <location evidence="4">Virion</location>
    </subcellularLocation>
    <text>All the enzymes and other proteins required to synthesize early mRNAs are packaged within the virion core along with the DNA genome.</text>
</comment>
<comment type="domain">
    <text evidence="1">The N-terminus contains the triphosphatase and guanylyltransferase domains, whereas the C-terminus contains the methyltransferase domain. The N-terminus is involved in binding to the termination motif 5'-UUUUUNU-3' in the nascent mRNA (By similarity).</text>
</comment>
<comment type="similarity">
    <text evidence="4">In the N-terminal section; belongs to the dsDNA virus mRNA guanylyltransferase family.</text>
</comment>
<comment type="similarity">
    <text evidence="3">In the C-terminal section; belongs to the class I-like SAM-binding methyltransferase superfamily. mRNA cap 0 methyltransferase family.</text>
</comment>